<comment type="function">
    <text evidence="1">Subunit of the peripheral V1 complex of vacuolar ATPase. Subunit H activates the ATPase activity of the enzyme and couples ATPase activity to proton flow. Vacuolar ATPase is responsible for acidifying a variety of intracellular compartments in eukaryotic cells, thus providing most of the energy required for transport processes in the vacuolar system (By similarity).</text>
</comment>
<comment type="subunit">
    <text evidence="1">V-ATPase is a heteromultimeric enzyme composed of a peripheral catalytic V1 complex (components A to H) attached to an integral membrane V0 proton pore complex (components: a, c, c', c'' and d).</text>
</comment>
<comment type="similarity">
    <text evidence="2">Belongs to the V-ATPase H subunit family.</text>
</comment>
<comment type="sequence caution" evidence="2">
    <conflict type="erroneous gene model prediction">
        <sequence resource="EMBL-CDS" id="BAF21848"/>
    </conflict>
</comment>
<keyword id="KW-0375">Hydrogen ion transport</keyword>
<keyword id="KW-0406">Ion transport</keyword>
<keyword id="KW-1185">Reference proteome</keyword>
<keyword id="KW-0813">Transport</keyword>
<gene>
    <name type="ordered locus">Os07g0549700</name>
    <name type="ordered locus">LOC_Os07g36470</name>
    <name type="ORF">P0534A03.126</name>
</gene>
<accession>Q84ZC0</accession>
<accession>Q0D5M5</accession>
<sequence>MDHAELTTEQVLKRDIPWESYMANKLISGTCLQLLRRYDHKPESQRGPLLDEDGPSYVRVFLNILRNISKEDTVEYVLALIDEMLAVNPKRAALFYDNSLSGEDIYDPFLRLLLKGNWFVQEKSCKILTQIISARPKMQNGIVPNGEASNSKSKLTSTQDVLRGLVDWLCSQLRNPTHPNCSVPTAMHCLATLLREQYVRALFVQADGVKLLIPLISPASTQQSIQLLYETCLCIWLLSFYDAAVDYLSTTRVMPRLVEVVKGSTKEKVVRVVIMSIRNLLAKGAFAAQMIDLGLPHIVQNLKAQAWTDEDLLDALNQLEIGLKDNLKKLSSFEKYKQQVLLGHLDWSPMHKDPSFWRENINNFEENDFQILRVLMTIIDTSADTTALAVACYDLSQFLQYHPSGRIVVADLKAKDRVMKLMNHENAEVRKNALLCVQRLFLGAKYASFLQT</sequence>
<evidence type="ECO:0000250" key="1"/>
<evidence type="ECO:0000305" key="2"/>
<feature type="chain" id="PRO_0000247643" description="Probable V-type proton ATPase subunit H">
    <location>
        <begin position="1"/>
        <end position="452"/>
    </location>
</feature>
<dbReference type="EMBL" id="AP004401">
    <property type="protein sequence ID" value="BAC57732.1"/>
    <property type="molecule type" value="Genomic_DNA"/>
</dbReference>
<dbReference type="EMBL" id="AP008213">
    <property type="protein sequence ID" value="BAF21848.1"/>
    <property type="status" value="ALT_SEQ"/>
    <property type="molecule type" value="Genomic_DNA"/>
</dbReference>
<dbReference type="EMBL" id="AP014963">
    <property type="status" value="NOT_ANNOTATED_CDS"/>
    <property type="molecule type" value="Genomic_DNA"/>
</dbReference>
<dbReference type="EMBL" id="AK067714">
    <property type="status" value="NOT_ANNOTATED_CDS"/>
    <property type="molecule type" value="mRNA"/>
</dbReference>
<dbReference type="RefSeq" id="XP_015647646.1">
    <property type="nucleotide sequence ID" value="XM_015792160.1"/>
</dbReference>
<dbReference type="SMR" id="Q84ZC0"/>
<dbReference type="FunCoup" id="Q84ZC0">
    <property type="interactions" value="3604"/>
</dbReference>
<dbReference type="STRING" id="39947.Q84ZC0"/>
<dbReference type="PaxDb" id="39947-Q84ZC0"/>
<dbReference type="eggNOG" id="KOG2759">
    <property type="taxonomic scope" value="Eukaryota"/>
</dbReference>
<dbReference type="InParanoid" id="Q84ZC0"/>
<dbReference type="OrthoDB" id="10263554at2759"/>
<dbReference type="Proteomes" id="UP000000763">
    <property type="component" value="Chromosome 7"/>
</dbReference>
<dbReference type="Proteomes" id="UP000059680">
    <property type="component" value="Chromosome 7"/>
</dbReference>
<dbReference type="GO" id="GO:0000221">
    <property type="term" value="C:vacuolar proton-transporting V-type ATPase, V1 domain"/>
    <property type="evidence" value="ECO:0007669"/>
    <property type="project" value="InterPro"/>
</dbReference>
<dbReference type="GO" id="GO:0046961">
    <property type="term" value="F:proton-transporting ATPase activity, rotational mechanism"/>
    <property type="evidence" value="ECO:0007669"/>
    <property type="project" value="InterPro"/>
</dbReference>
<dbReference type="FunFam" id="1.25.40.150:FF:000004">
    <property type="entry name" value="V-type proton ATPase subunit H"/>
    <property type="match status" value="1"/>
</dbReference>
<dbReference type="Gene3D" id="1.25.10.10">
    <property type="entry name" value="Leucine-rich Repeat Variant"/>
    <property type="match status" value="1"/>
</dbReference>
<dbReference type="Gene3D" id="1.25.40.150">
    <property type="entry name" value="V-type ATPase, subunit H, C-terminal domain"/>
    <property type="match status" value="1"/>
</dbReference>
<dbReference type="InterPro" id="IPR011989">
    <property type="entry name" value="ARM-like"/>
</dbReference>
<dbReference type="InterPro" id="IPR016024">
    <property type="entry name" value="ARM-type_fold"/>
</dbReference>
<dbReference type="InterPro" id="IPR000225">
    <property type="entry name" value="Armadillo"/>
</dbReference>
<dbReference type="InterPro" id="IPR004908">
    <property type="entry name" value="ATPase_V1-cplx_hsu"/>
</dbReference>
<dbReference type="InterPro" id="IPR011987">
    <property type="entry name" value="ATPase_V1-cplx_hsu_C"/>
</dbReference>
<dbReference type="InterPro" id="IPR038497">
    <property type="entry name" value="ATPase_V1-cplx_hsu_C_sf"/>
</dbReference>
<dbReference type="PANTHER" id="PTHR10698">
    <property type="entry name" value="V-TYPE PROTON ATPASE SUBUNIT H"/>
    <property type="match status" value="1"/>
</dbReference>
<dbReference type="PANTHER" id="PTHR10698:SF0">
    <property type="entry name" value="V-TYPE PROTON ATPASE SUBUNIT H"/>
    <property type="match status" value="1"/>
</dbReference>
<dbReference type="Pfam" id="PF11698">
    <property type="entry name" value="V-ATPase_H_C"/>
    <property type="match status" value="1"/>
</dbReference>
<dbReference type="Pfam" id="PF03224">
    <property type="entry name" value="V-ATPase_H_N"/>
    <property type="match status" value="1"/>
</dbReference>
<dbReference type="PIRSF" id="PIRSF032184">
    <property type="entry name" value="ATPase_V1_H"/>
    <property type="match status" value="1"/>
</dbReference>
<dbReference type="SMART" id="SM00185">
    <property type="entry name" value="ARM"/>
    <property type="match status" value="3"/>
</dbReference>
<dbReference type="SUPFAM" id="SSF48371">
    <property type="entry name" value="ARM repeat"/>
    <property type="match status" value="1"/>
</dbReference>
<name>VATH_ORYSJ</name>
<organism>
    <name type="scientific">Oryza sativa subsp. japonica</name>
    <name type="common">Rice</name>
    <dbReference type="NCBI Taxonomy" id="39947"/>
    <lineage>
        <taxon>Eukaryota</taxon>
        <taxon>Viridiplantae</taxon>
        <taxon>Streptophyta</taxon>
        <taxon>Embryophyta</taxon>
        <taxon>Tracheophyta</taxon>
        <taxon>Spermatophyta</taxon>
        <taxon>Magnoliopsida</taxon>
        <taxon>Liliopsida</taxon>
        <taxon>Poales</taxon>
        <taxon>Poaceae</taxon>
        <taxon>BOP clade</taxon>
        <taxon>Oryzoideae</taxon>
        <taxon>Oryzeae</taxon>
        <taxon>Oryzinae</taxon>
        <taxon>Oryza</taxon>
        <taxon>Oryza sativa</taxon>
    </lineage>
</organism>
<proteinExistence type="evidence at transcript level"/>
<protein>
    <recommendedName>
        <fullName>Probable V-type proton ATPase subunit H</fullName>
        <shortName>V-ATPase subunit H</shortName>
    </recommendedName>
    <alternativeName>
        <fullName>Vacuolar proton pump subunit H</fullName>
    </alternativeName>
</protein>
<reference key="1">
    <citation type="journal article" date="2005" name="Nature">
        <title>The map-based sequence of the rice genome.</title>
        <authorList>
            <consortium name="International rice genome sequencing project (IRGSP)"/>
        </authorList>
    </citation>
    <scope>NUCLEOTIDE SEQUENCE [LARGE SCALE GENOMIC DNA]</scope>
    <source>
        <strain>cv. Nipponbare</strain>
    </source>
</reference>
<reference key="2">
    <citation type="journal article" date="2008" name="Nucleic Acids Res.">
        <title>The rice annotation project database (RAP-DB): 2008 update.</title>
        <authorList>
            <consortium name="The rice annotation project (RAP)"/>
        </authorList>
    </citation>
    <scope>GENOME REANNOTATION</scope>
    <source>
        <strain>cv. Nipponbare</strain>
    </source>
</reference>
<reference key="3">
    <citation type="journal article" date="2013" name="Rice">
        <title>Improvement of the Oryza sativa Nipponbare reference genome using next generation sequence and optical map data.</title>
        <authorList>
            <person name="Kawahara Y."/>
            <person name="de la Bastide M."/>
            <person name="Hamilton J.P."/>
            <person name="Kanamori H."/>
            <person name="McCombie W.R."/>
            <person name="Ouyang S."/>
            <person name="Schwartz D.C."/>
            <person name="Tanaka T."/>
            <person name="Wu J."/>
            <person name="Zhou S."/>
            <person name="Childs K.L."/>
            <person name="Davidson R.M."/>
            <person name="Lin H."/>
            <person name="Quesada-Ocampo L."/>
            <person name="Vaillancourt B."/>
            <person name="Sakai H."/>
            <person name="Lee S.S."/>
            <person name="Kim J."/>
            <person name="Numa H."/>
            <person name="Itoh T."/>
            <person name="Buell C.R."/>
            <person name="Matsumoto T."/>
        </authorList>
    </citation>
    <scope>GENOME REANNOTATION</scope>
    <source>
        <strain>cv. Nipponbare</strain>
    </source>
</reference>
<reference key="4">
    <citation type="journal article" date="2003" name="Science">
        <title>Collection, mapping, and annotation of over 28,000 cDNA clones from japonica rice.</title>
        <authorList>
            <consortium name="The rice full-length cDNA consortium"/>
        </authorList>
    </citation>
    <scope>NUCLEOTIDE SEQUENCE [LARGE SCALE MRNA]</scope>
    <source>
        <strain>cv. Nipponbare</strain>
    </source>
</reference>